<organism>
    <name type="scientific">Aliivibrio fischeri (strain ATCC 700601 / ES114)</name>
    <name type="common">Vibrio fischeri</name>
    <dbReference type="NCBI Taxonomy" id="312309"/>
    <lineage>
        <taxon>Bacteria</taxon>
        <taxon>Pseudomonadati</taxon>
        <taxon>Pseudomonadota</taxon>
        <taxon>Gammaproteobacteria</taxon>
        <taxon>Vibrionales</taxon>
        <taxon>Vibrionaceae</taxon>
        <taxon>Aliivibrio</taxon>
    </lineage>
</organism>
<sequence length="283" mass="32464">MKQYLDLCQRIVDEGTWIENERTGKRCLTVINADLTYDVENGVFPLVTTRKSFWKAAVAEMIGYIRGYDSAEDFRKIGTKTWDANANLNDAWLNNPHRKGDDDMGRVYGVQGRSWAKPNGEFVDQLKKIIDDLSQGIDDRGEILNFYNPGEFDMGCLRPCMYSHHFSLLGDTLYLNSTQRSCDVPLGLNFNMVQVYFLLAIVAQITGHKAGKAYHKIVNAHIYEDQLELMQSVQLKREPLQAPIFKINPEIKSLEDLETWVTMDDFEVIGYESHEAIKYPFSV</sequence>
<protein>
    <recommendedName>
        <fullName evidence="1">Thymidylate synthase</fullName>
        <shortName evidence="1">TS</shortName>
        <shortName evidence="1">TSase</shortName>
        <ecNumber evidence="1">2.1.1.45</ecNumber>
    </recommendedName>
</protein>
<reference key="1">
    <citation type="journal article" date="2005" name="Proc. Natl. Acad. Sci. U.S.A.">
        <title>Complete genome sequence of Vibrio fischeri: a symbiotic bacterium with pathogenic congeners.</title>
        <authorList>
            <person name="Ruby E.G."/>
            <person name="Urbanowski M."/>
            <person name="Campbell J."/>
            <person name="Dunn A."/>
            <person name="Faini M."/>
            <person name="Gunsalus R."/>
            <person name="Lostroh P."/>
            <person name="Lupp C."/>
            <person name="McCann J."/>
            <person name="Millikan D."/>
            <person name="Schaefer A."/>
            <person name="Stabb E."/>
            <person name="Stevens A."/>
            <person name="Visick K."/>
            <person name="Whistler C."/>
            <person name="Greenberg E.P."/>
        </authorList>
    </citation>
    <scope>NUCLEOTIDE SEQUENCE [LARGE SCALE GENOMIC DNA]</scope>
    <source>
        <strain>ATCC 700601 / ES114</strain>
    </source>
</reference>
<name>TYSY_ALIF1</name>
<feature type="chain" id="PRO_0000141040" description="Thymidylate synthase">
    <location>
        <begin position="1"/>
        <end position="283"/>
    </location>
</feature>
<feature type="active site" description="Nucleophile" evidence="1">
    <location>
        <position position="160"/>
    </location>
</feature>
<feature type="binding site" evidence="1">
    <location>
        <position position="22"/>
    </location>
    <ligand>
        <name>dUMP</name>
        <dbReference type="ChEBI" id="CHEBI:246422"/>
    </ligand>
</feature>
<feature type="binding site" evidence="1">
    <location>
        <begin position="180"/>
        <end position="183"/>
    </location>
    <ligand>
        <name>dUMP</name>
        <dbReference type="ChEBI" id="CHEBI:246422"/>
    </ligand>
</feature>
<feature type="binding site" evidence="1">
    <location>
        <position position="183"/>
    </location>
    <ligand>
        <name>(6R)-5,10-methylene-5,6,7,8-tetrahydrofolate</name>
        <dbReference type="ChEBI" id="CHEBI:15636"/>
    </ligand>
</feature>
<feature type="binding site" evidence="1">
    <location>
        <position position="191"/>
    </location>
    <ligand>
        <name>dUMP</name>
        <dbReference type="ChEBI" id="CHEBI:246422"/>
    </ligand>
</feature>
<feature type="binding site" evidence="1">
    <location>
        <begin position="221"/>
        <end position="223"/>
    </location>
    <ligand>
        <name>dUMP</name>
        <dbReference type="ChEBI" id="CHEBI:246422"/>
    </ligand>
</feature>
<feature type="binding site" evidence="1">
    <location>
        <position position="282"/>
    </location>
    <ligand>
        <name>(6R)-5,10-methylene-5,6,7,8-tetrahydrofolate</name>
        <dbReference type="ChEBI" id="CHEBI:15636"/>
    </ligand>
</feature>
<proteinExistence type="inferred from homology"/>
<accession>Q5E7P1</accession>
<keyword id="KW-0963">Cytoplasm</keyword>
<keyword id="KW-0489">Methyltransferase</keyword>
<keyword id="KW-0545">Nucleotide biosynthesis</keyword>
<keyword id="KW-1185">Reference proteome</keyword>
<keyword id="KW-0808">Transferase</keyword>
<dbReference type="EC" id="2.1.1.45" evidence="1"/>
<dbReference type="EMBL" id="CP000020">
    <property type="protein sequence ID" value="AAW84955.1"/>
    <property type="status" value="ALT_INIT"/>
    <property type="molecule type" value="Genomic_DNA"/>
</dbReference>
<dbReference type="RefSeq" id="WP_047863653.1">
    <property type="nucleotide sequence ID" value="NC_006840.2"/>
</dbReference>
<dbReference type="RefSeq" id="YP_203843.1">
    <property type="nucleotide sequence ID" value="NC_006840.2"/>
</dbReference>
<dbReference type="SMR" id="Q5E7P1"/>
<dbReference type="STRING" id="312309.VF_0460"/>
<dbReference type="EnsemblBacteria" id="AAW84955">
    <property type="protein sequence ID" value="AAW84955"/>
    <property type="gene ID" value="VF_0460"/>
</dbReference>
<dbReference type="GeneID" id="54163096"/>
<dbReference type="KEGG" id="vfi:VF_0460"/>
<dbReference type="PATRIC" id="fig|312309.11.peg.450"/>
<dbReference type="eggNOG" id="COG0207">
    <property type="taxonomic scope" value="Bacteria"/>
</dbReference>
<dbReference type="HOGENOM" id="CLU_021669_0_1_6"/>
<dbReference type="OrthoDB" id="9774633at2"/>
<dbReference type="UniPathway" id="UPA00575"/>
<dbReference type="Proteomes" id="UP000000537">
    <property type="component" value="Chromosome I"/>
</dbReference>
<dbReference type="GO" id="GO:0005829">
    <property type="term" value="C:cytosol"/>
    <property type="evidence" value="ECO:0007669"/>
    <property type="project" value="TreeGrafter"/>
</dbReference>
<dbReference type="GO" id="GO:0004799">
    <property type="term" value="F:thymidylate synthase activity"/>
    <property type="evidence" value="ECO:0007669"/>
    <property type="project" value="UniProtKB-UniRule"/>
</dbReference>
<dbReference type="GO" id="GO:0006231">
    <property type="term" value="P:dTMP biosynthetic process"/>
    <property type="evidence" value="ECO:0007669"/>
    <property type="project" value="UniProtKB-UniRule"/>
</dbReference>
<dbReference type="GO" id="GO:0006235">
    <property type="term" value="P:dTTP biosynthetic process"/>
    <property type="evidence" value="ECO:0007669"/>
    <property type="project" value="UniProtKB-UniRule"/>
</dbReference>
<dbReference type="GO" id="GO:0032259">
    <property type="term" value="P:methylation"/>
    <property type="evidence" value="ECO:0007669"/>
    <property type="project" value="UniProtKB-KW"/>
</dbReference>
<dbReference type="CDD" id="cd00351">
    <property type="entry name" value="TS_Pyrimidine_HMase"/>
    <property type="match status" value="1"/>
</dbReference>
<dbReference type="Gene3D" id="3.30.572.10">
    <property type="entry name" value="Thymidylate synthase/dCMP hydroxymethylase domain"/>
    <property type="match status" value="1"/>
</dbReference>
<dbReference type="HAMAP" id="MF_00008">
    <property type="entry name" value="Thymidy_synth_bact"/>
    <property type="match status" value="1"/>
</dbReference>
<dbReference type="InterPro" id="IPR045097">
    <property type="entry name" value="Thymidate_synth/dCMP_Mease"/>
</dbReference>
<dbReference type="InterPro" id="IPR023451">
    <property type="entry name" value="Thymidate_synth/dCMP_Mease_dom"/>
</dbReference>
<dbReference type="InterPro" id="IPR036926">
    <property type="entry name" value="Thymidate_synth/dCMP_Mease_sf"/>
</dbReference>
<dbReference type="InterPro" id="IPR000398">
    <property type="entry name" value="Thymidylate_synthase"/>
</dbReference>
<dbReference type="InterPro" id="IPR020940">
    <property type="entry name" value="Thymidylate_synthase_AS"/>
</dbReference>
<dbReference type="NCBIfam" id="NF002498">
    <property type="entry name" value="PRK01827.1-4"/>
    <property type="match status" value="1"/>
</dbReference>
<dbReference type="NCBIfam" id="TIGR03284">
    <property type="entry name" value="thym_sym"/>
    <property type="match status" value="1"/>
</dbReference>
<dbReference type="PANTHER" id="PTHR11548:SF9">
    <property type="entry name" value="THYMIDYLATE SYNTHASE"/>
    <property type="match status" value="1"/>
</dbReference>
<dbReference type="PANTHER" id="PTHR11548">
    <property type="entry name" value="THYMIDYLATE SYNTHASE 1"/>
    <property type="match status" value="1"/>
</dbReference>
<dbReference type="Pfam" id="PF00303">
    <property type="entry name" value="Thymidylat_synt"/>
    <property type="match status" value="1"/>
</dbReference>
<dbReference type="PRINTS" id="PR00108">
    <property type="entry name" value="THYMDSNTHASE"/>
</dbReference>
<dbReference type="SUPFAM" id="SSF55831">
    <property type="entry name" value="Thymidylate synthase/dCMP hydroxymethylase"/>
    <property type="match status" value="1"/>
</dbReference>
<dbReference type="PROSITE" id="PS00091">
    <property type="entry name" value="THYMIDYLATE_SYNTHASE"/>
    <property type="match status" value="1"/>
</dbReference>
<evidence type="ECO:0000255" key="1">
    <source>
        <dbReference type="HAMAP-Rule" id="MF_00008"/>
    </source>
</evidence>
<evidence type="ECO:0000305" key="2"/>
<comment type="function">
    <text evidence="1">Catalyzes the reductive methylation of 2'-deoxyuridine-5'-monophosphate (dUMP) to 2'-deoxythymidine-5'-monophosphate (dTMP) while utilizing 5,10-methylenetetrahydrofolate (mTHF) as the methyl donor and reductant in the reaction, yielding dihydrofolate (DHF) as a by-product. This enzymatic reaction provides an intracellular de novo source of dTMP, an essential precursor for DNA biosynthesis.</text>
</comment>
<comment type="catalytic activity">
    <reaction evidence="1">
        <text>dUMP + (6R)-5,10-methylene-5,6,7,8-tetrahydrofolate = 7,8-dihydrofolate + dTMP</text>
        <dbReference type="Rhea" id="RHEA:12104"/>
        <dbReference type="ChEBI" id="CHEBI:15636"/>
        <dbReference type="ChEBI" id="CHEBI:57451"/>
        <dbReference type="ChEBI" id="CHEBI:63528"/>
        <dbReference type="ChEBI" id="CHEBI:246422"/>
        <dbReference type="EC" id="2.1.1.45"/>
    </reaction>
</comment>
<comment type="pathway">
    <text evidence="1">Pyrimidine metabolism; dTTP biosynthesis.</text>
</comment>
<comment type="subunit">
    <text evidence="1">Homodimer.</text>
</comment>
<comment type="subcellular location">
    <subcellularLocation>
        <location evidence="1">Cytoplasm</location>
    </subcellularLocation>
</comment>
<comment type="similarity">
    <text evidence="1">Belongs to the thymidylate synthase family. Bacterial-type ThyA subfamily.</text>
</comment>
<comment type="sequence caution" evidence="2">
    <conflict type="erroneous initiation">
        <sequence resource="EMBL-CDS" id="AAW84955"/>
    </conflict>
</comment>
<gene>
    <name evidence="1" type="primary">thyA</name>
    <name type="ordered locus">VF_0460</name>
</gene>